<protein>
    <recommendedName>
        <fullName evidence="1">ATP-dependent dethiobiotin synthetase BioD</fullName>
        <ecNumber evidence="1">6.3.3.3</ecNumber>
    </recommendedName>
    <alternativeName>
        <fullName evidence="1">DTB synthetase</fullName>
        <shortName evidence="1">DTBS</shortName>
    </alternativeName>
    <alternativeName>
        <fullName evidence="1">Dethiobiotin synthase</fullName>
    </alternativeName>
</protein>
<sequence>MQHPAFYVTGTDTGIGKTMGSTALLHALRARGHRAVGMKPVASGCEHTPHGWRNEDALALQAASDPQPDYAVLNPYALPAPLAPELAAAEVGVTLALEPIVQAFAQLRTQAEVVVVEGVGGWAAPLSATLDQADLVCALQLPVVLVVGVRLGCINHARLTAAAIAADGLQCIGWIANEVDPQMERIEENIGMLRQRLAMPYWGRIPWRPGADAATQAHGLQLPR</sequence>
<reference key="1">
    <citation type="journal article" date="2002" name="Nature">
        <title>Comparison of the genomes of two Xanthomonas pathogens with differing host specificities.</title>
        <authorList>
            <person name="da Silva A.C.R."/>
            <person name="Ferro J.A."/>
            <person name="Reinach F.C."/>
            <person name="Farah C.S."/>
            <person name="Furlan L.R."/>
            <person name="Quaggio R.B."/>
            <person name="Monteiro-Vitorello C.B."/>
            <person name="Van Sluys M.A."/>
            <person name="Almeida N.F. Jr."/>
            <person name="Alves L.M.C."/>
            <person name="do Amaral A.M."/>
            <person name="Bertolini M.C."/>
            <person name="Camargo L.E.A."/>
            <person name="Camarotte G."/>
            <person name="Cannavan F."/>
            <person name="Cardozo J."/>
            <person name="Chambergo F."/>
            <person name="Ciapina L.P."/>
            <person name="Cicarelli R.M.B."/>
            <person name="Coutinho L.L."/>
            <person name="Cursino-Santos J.R."/>
            <person name="El-Dorry H."/>
            <person name="Faria J.B."/>
            <person name="Ferreira A.J.S."/>
            <person name="Ferreira R.C.C."/>
            <person name="Ferro M.I.T."/>
            <person name="Formighieri E.F."/>
            <person name="Franco M.C."/>
            <person name="Greggio C.C."/>
            <person name="Gruber A."/>
            <person name="Katsuyama A.M."/>
            <person name="Kishi L.T."/>
            <person name="Leite R.P."/>
            <person name="Lemos E.G.M."/>
            <person name="Lemos M.V.F."/>
            <person name="Locali E.C."/>
            <person name="Machado M.A."/>
            <person name="Madeira A.M.B.N."/>
            <person name="Martinez-Rossi N.M."/>
            <person name="Martins E.C."/>
            <person name="Meidanis J."/>
            <person name="Menck C.F.M."/>
            <person name="Miyaki C.Y."/>
            <person name="Moon D.H."/>
            <person name="Moreira L.M."/>
            <person name="Novo M.T.M."/>
            <person name="Okura V.K."/>
            <person name="Oliveira M.C."/>
            <person name="Oliveira V.R."/>
            <person name="Pereira H.A."/>
            <person name="Rossi A."/>
            <person name="Sena J.A.D."/>
            <person name="Silva C."/>
            <person name="de Souza R.F."/>
            <person name="Spinola L.A.F."/>
            <person name="Takita M.A."/>
            <person name="Tamura R.E."/>
            <person name="Teixeira E.C."/>
            <person name="Tezza R.I.D."/>
            <person name="Trindade dos Santos M."/>
            <person name="Truffi D."/>
            <person name="Tsai S.M."/>
            <person name="White F.F."/>
            <person name="Setubal J.C."/>
            <person name="Kitajima J.P."/>
        </authorList>
    </citation>
    <scope>NUCLEOTIDE SEQUENCE [LARGE SCALE GENOMIC DNA]</scope>
    <source>
        <strain>306</strain>
    </source>
</reference>
<name>BIOD_XANAC</name>
<comment type="function">
    <text evidence="1">Catalyzes a mechanistically unusual reaction, the ATP-dependent insertion of CO2 between the N7 and N8 nitrogen atoms of 7,8-diaminopelargonic acid (DAPA, also called 7,8-diammoniononanoate) to form a ureido ring.</text>
</comment>
<comment type="catalytic activity">
    <reaction evidence="1">
        <text>(7R,8S)-7,8-diammoniononanoate + CO2 + ATP = (4R,5S)-dethiobiotin + ADP + phosphate + 3 H(+)</text>
        <dbReference type="Rhea" id="RHEA:15805"/>
        <dbReference type="ChEBI" id="CHEBI:15378"/>
        <dbReference type="ChEBI" id="CHEBI:16526"/>
        <dbReference type="ChEBI" id="CHEBI:30616"/>
        <dbReference type="ChEBI" id="CHEBI:43474"/>
        <dbReference type="ChEBI" id="CHEBI:149469"/>
        <dbReference type="ChEBI" id="CHEBI:149473"/>
        <dbReference type="ChEBI" id="CHEBI:456216"/>
        <dbReference type="EC" id="6.3.3.3"/>
    </reaction>
</comment>
<comment type="cofactor">
    <cofactor evidence="1">
        <name>Mg(2+)</name>
        <dbReference type="ChEBI" id="CHEBI:18420"/>
    </cofactor>
</comment>
<comment type="pathway">
    <text evidence="1">Cofactor biosynthesis; biotin biosynthesis; biotin from 7,8-diaminononanoate: step 1/2.</text>
</comment>
<comment type="subunit">
    <text evidence="1">Homodimer.</text>
</comment>
<comment type="subcellular location">
    <subcellularLocation>
        <location evidence="1">Cytoplasm</location>
    </subcellularLocation>
</comment>
<comment type="similarity">
    <text evidence="1">Belongs to the dethiobiotin synthetase family.</text>
</comment>
<feature type="chain" id="PRO_0000187998" description="ATP-dependent dethiobiotin synthetase BioD">
    <location>
        <begin position="1"/>
        <end position="224"/>
    </location>
</feature>
<feature type="active site" evidence="1">
    <location>
        <position position="39"/>
    </location>
</feature>
<feature type="binding site" evidence="1">
    <location>
        <position position="18"/>
    </location>
    <ligand>
        <name>Mg(2+)</name>
        <dbReference type="ChEBI" id="CHEBI:18420"/>
    </ligand>
</feature>
<feature type="binding site" evidence="1">
    <location>
        <position position="43"/>
    </location>
    <ligand>
        <name>substrate</name>
    </ligand>
</feature>
<feature type="binding site" evidence="1">
    <location>
        <position position="56"/>
    </location>
    <ligand>
        <name>ATP</name>
        <dbReference type="ChEBI" id="CHEBI:30616"/>
    </ligand>
</feature>
<feature type="binding site" evidence="1">
    <location>
        <position position="56"/>
    </location>
    <ligand>
        <name>Mg(2+)</name>
        <dbReference type="ChEBI" id="CHEBI:18420"/>
    </ligand>
</feature>
<feature type="binding site" evidence="1">
    <location>
        <begin position="117"/>
        <end position="120"/>
    </location>
    <ligand>
        <name>ATP</name>
        <dbReference type="ChEBI" id="CHEBI:30616"/>
    </ligand>
</feature>
<feature type="binding site" evidence="1">
    <location>
        <position position="117"/>
    </location>
    <ligand>
        <name>Mg(2+)</name>
        <dbReference type="ChEBI" id="CHEBI:18420"/>
    </ligand>
</feature>
<feature type="binding site" evidence="1">
    <location>
        <begin position="177"/>
        <end position="178"/>
    </location>
    <ligand>
        <name>ATP</name>
        <dbReference type="ChEBI" id="CHEBI:30616"/>
    </ligand>
</feature>
<dbReference type="EC" id="6.3.3.3" evidence="1"/>
<dbReference type="EMBL" id="AE008923">
    <property type="protein sequence ID" value="AAM38459.1"/>
    <property type="molecule type" value="Genomic_DNA"/>
</dbReference>
<dbReference type="RefSeq" id="WP_005926566.1">
    <property type="nucleotide sequence ID" value="NC_003919.1"/>
</dbReference>
<dbReference type="SMR" id="Q8PGK0"/>
<dbReference type="GeneID" id="66912650"/>
<dbReference type="KEGG" id="xac:XAC3616"/>
<dbReference type="eggNOG" id="COG0132">
    <property type="taxonomic scope" value="Bacteria"/>
</dbReference>
<dbReference type="HOGENOM" id="CLU_072551_0_0_6"/>
<dbReference type="UniPathway" id="UPA00078">
    <property type="reaction ID" value="UER00161"/>
</dbReference>
<dbReference type="Proteomes" id="UP000000576">
    <property type="component" value="Chromosome"/>
</dbReference>
<dbReference type="GO" id="GO:0005829">
    <property type="term" value="C:cytosol"/>
    <property type="evidence" value="ECO:0007669"/>
    <property type="project" value="TreeGrafter"/>
</dbReference>
<dbReference type="GO" id="GO:0005524">
    <property type="term" value="F:ATP binding"/>
    <property type="evidence" value="ECO:0007669"/>
    <property type="project" value="UniProtKB-UniRule"/>
</dbReference>
<dbReference type="GO" id="GO:0004141">
    <property type="term" value="F:dethiobiotin synthase activity"/>
    <property type="evidence" value="ECO:0007669"/>
    <property type="project" value="UniProtKB-UniRule"/>
</dbReference>
<dbReference type="GO" id="GO:0000287">
    <property type="term" value="F:magnesium ion binding"/>
    <property type="evidence" value="ECO:0007669"/>
    <property type="project" value="UniProtKB-UniRule"/>
</dbReference>
<dbReference type="GO" id="GO:0009102">
    <property type="term" value="P:biotin biosynthetic process"/>
    <property type="evidence" value="ECO:0007669"/>
    <property type="project" value="UniProtKB-UniRule"/>
</dbReference>
<dbReference type="CDD" id="cd03109">
    <property type="entry name" value="DTBS"/>
    <property type="match status" value="1"/>
</dbReference>
<dbReference type="FunFam" id="3.40.50.300:FF:000292">
    <property type="entry name" value="ATP-dependent dethiobiotin synthetase BioD"/>
    <property type="match status" value="1"/>
</dbReference>
<dbReference type="Gene3D" id="3.40.50.300">
    <property type="entry name" value="P-loop containing nucleotide triphosphate hydrolases"/>
    <property type="match status" value="1"/>
</dbReference>
<dbReference type="HAMAP" id="MF_00336">
    <property type="entry name" value="BioD"/>
    <property type="match status" value="1"/>
</dbReference>
<dbReference type="InterPro" id="IPR004472">
    <property type="entry name" value="DTB_synth_BioD"/>
</dbReference>
<dbReference type="InterPro" id="IPR027417">
    <property type="entry name" value="P-loop_NTPase"/>
</dbReference>
<dbReference type="NCBIfam" id="TIGR00347">
    <property type="entry name" value="bioD"/>
    <property type="match status" value="1"/>
</dbReference>
<dbReference type="PANTHER" id="PTHR43210">
    <property type="entry name" value="DETHIOBIOTIN SYNTHETASE"/>
    <property type="match status" value="1"/>
</dbReference>
<dbReference type="PANTHER" id="PTHR43210:SF5">
    <property type="entry name" value="DETHIOBIOTIN SYNTHETASE"/>
    <property type="match status" value="1"/>
</dbReference>
<dbReference type="Pfam" id="PF13500">
    <property type="entry name" value="AAA_26"/>
    <property type="match status" value="1"/>
</dbReference>
<dbReference type="PIRSF" id="PIRSF006755">
    <property type="entry name" value="DTB_synth"/>
    <property type="match status" value="1"/>
</dbReference>
<dbReference type="SUPFAM" id="SSF52540">
    <property type="entry name" value="P-loop containing nucleoside triphosphate hydrolases"/>
    <property type="match status" value="1"/>
</dbReference>
<accession>Q8PGK0</accession>
<organism>
    <name type="scientific">Xanthomonas axonopodis pv. citri (strain 306)</name>
    <dbReference type="NCBI Taxonomy" id="190486"/>
    <lineage>
        <taxon>Bacteria</taxon>
        <taxon>Pseudomonadati</taxon>
        <taxon>Pseudomonadota</taxon>
        <taxon>Gammaproteobacteria</taxon>
        <taxon>Lysobacterales</taxon>
        <taxon>Lysobacteraceae</taxon>
        <taxon>Xanthomonas</taxon>
    </lineage>
</organism>
<gene>
    <name evidence="1" type="primary">bioD</name>
    <name type="ordered locus">XAC3616</name>
</gene>
<proteinExistence type="inferred from homology"/>
<evidence type="ECO:0000255" key="1">
    <source>
        <dbReference type="HAMAP-Rule" id="MF_00336"/>
    </source>
</evidence>
<keyword id="KW-0067">ATP-binding</keyword>
<keyword id="KW-0093">Biotin biosynthesis</keyword>
<keyword id="KW-0963">Cytoplasm</keyword>
<keyword id="KW-0436">Ligase</keyword>
<keyword id="KW-0460">Magnesium</keyword>
<keyword id="KW-0479">Metal-binding</keyword>
<keyword id="KW-0547">Nucleotide-binding</keyword>